<comment type="function">
    <text evidence="5">Involved in an anaerobic respiration pathway that converts the sulfonate isethionate (2-hydroxyethanesulfonate) to ammonia, acetate and sulfide. Catalyzes activation of the isethionate sulfite-lyase IseG under anaerobic conditions by generation of an organic free radical on a glycine residue, via a homolytic cleavage of S-adenosyl-L-methionine (SAM).</text>
</comment>
<comment type="catalytic activity">
    <reaction evidence="8">
        <text>glycyl-[protein] + reduced [flavodoxin] + S-adenosyl-L-methionine = glycin-2-yl radical-[protein] + semiquinone [flavodoxin] + 5'-deoxyadenosine + L-methionine + H(+)</text>
        <dbReference type="Rhea" id="RHEA:61976"/>
        <dbReference type="Rhea" id="RHEA-COMP:10622"/>
        <dbReference type="Rhea" id="RHEA-COMP:14480"/>
        <dbReference type="Rhea" id="RHEA-COMP:15993"/>
        <dbReference type="Rhea" id="RHEA-COMP:15994"/>
        <dbReference type="ChEBI" id="CHEBI:15378"/>
        <dbReference type="ChEBI" id="CHEBI:17319"/>
        <dbReference type="ChEBI" id="CHEBI:29947"/>
        <dbReference type="ChEBI" id="CHEBI:32722"/>
        <dbReference type="ChEBI" id="CHEBI:57618"/>
        <dbReference type="ChEBI" id="CHEBI:57844"/>
        <dbReference type="ChEBI" id="CHEBI:59789"/>
        <dbReference type="ChEBI" id="CHEBI:140311"/>
    </reaction>
    <physiologicalReaction direction="left-to-right" evidence="8">
        <dbReference type="Rhea" id="RHEA:61977"/>
    </physiologicalReaction>
</comment>
<comment type="cofactor">
    <cofactor evidence="3 5">
        <name>[4Fe-4S] cluster</name>
        <dbReference type="ChEBI" id="CHEBI:49883"/>
    </cofactor>
    <text evidence="3">Binds 3 [4Fe-4S] clusters. One cluster is coordinated with 3 cysteines and an exchangeable S-adenosyl-L-methionine.</text>
</comment>
<comment type="pathway">
    <text evidence="8">Organosulfur degradation; alkanesulfonate degradation.</text>
</comment>
<comment type="subunit">
    <text evidence="2">Monomer.</text>
</comment>
<comment type="interaction">
    <interactant intactId="EBI-10066541">
        <id>Q727N0</id>
    </interactant>
    <interactant intactId="EBI-10066547">
        <id>Q728C6</id>
        <label>DVU_2677</label>
    </interactant>
    <organismsDiffer>false</organismsDiffer>
    <experiments>2</experiments>
</comment>
<comment type="similarity">
    <text evidence="7">Belongs to the organic radical-activating enzymes family.</text>
</comment>
<keyword id="KW-0004">4Fe-4S</keyword>
<keyword id="KW-0408">Iron</keyword>
<keyword id="KW-0411">Iron-sulfur</keyword>
<keyword id="KW-0479">Metal-binding</keyword>
<keyword id="KW-0560">Oxidoreductase</keyword>
<keyword id="KW-1185">Reference proteome</keyword>
<keyword id="KW-0677">Repeat</keyword>
<keyword id="KW-0949">S-adenosyl-L-methionine</keyword>
<proteinExistence type="evidence at protein level"/>
<evidence type="ECO:0000250" key="1">
    <source>
        <dbReference type="UniProtKB" id="P0A9N4"/>
    </source>
</evidence>
<evidence type="ECO:0000250" key="2">
    <source>
        <dbReference type="UniProtKB" id="Q30W71"/>
    </source>
</evidence>
<evidence type="ECO:0000255" key="3">
    <source>
        <dbReference type="PROSITE-ProRule" id="PRU00711"/>
    </source>
</evidence>
<evidence type="ECO:0000255" key="4">
    <source>
        <dbReference type="PROSITE-ProRule" id="PRU01266"/>
    </source>
</evidence>
<evidence type="ECO:0000269" key="5">
    <source>
    </source>
</evidence>
<evidence type="ECO:0000303" key="6">
    <source>
    </source>
</evidence>
<evidence type="ECO:0000305" key="7"/>
<evidence type="ECO:0000305" key="8">
    <source>
    </source>
</evidence>
<evidence type="ECO:0000312" key="9">
    <source>
        <dbReference type="EMBL" id="AAS97297.1"/>
    </source>
</evidence>
<name>ISLB_NITV2</name>
<dbReference type="EC" id="1.97.1.-" evidence="8"/>
<dbReference type="EMBL" id="AE017285">
    <property type="protein sequence ID" value="AAS97297.1"/>
    <property type="molecule type" value="Genomic_DNA"/>
</dbReference>
<dbReference type="RefSeq" id="WP_010940091.1">
    <property type="nucleotide sequence ID" value="NC_002937.3"/>
</dbReference>
<dbReference type="RefSeq" id="YP_012037.1">
    <property type="nucleotide sequence ID" value="NC_002937.3"/>
</dbReference>
<dbReference type="SMR" id="Q727N0"/>
<dbReference type="IntAct" id="Q727N0">
    <property type="interactions" value="1"/>
</dbReference>
<dbReference type="STRING" id="882.DVU_2825"/>
<dbReference type="PaxDb" id="882-DVU_2825"/>
<dbReference type="EnsemblBacteria" id="AAS97297">
    <property type="protein sequence ID" value="AAS97297"/>
    <property type="gene ID" value="DVU_2825"/>
</dbReference>
<dbReference type="KEGG" id="dvu:DVU_2825"/>
<dbReference type="PATRIC" id="fig|882.5.peg.2553"/>
<dbReference type="eggNOG" id="COG1180">
    <property type="taxonomic scope" value="Bacteria"/>
</dbReference>
<dbReference type="HOGENOM" id="CLU_058969_0_0_7"/>
<dbReference type="OrthoDB" id="9782387at2"/>
<dbReference type="PhylomeDB" id="Q727N0"/>
<dbReference type="UniPathway" id="UPA00338"/>
<dbReference type="Proteomes" id="UP000002194">
    <property type="component" value="Chromosome"/>
</dbReference>
<dbReference type="GO" id="GO:0051539">
    <property type="term" value="F:4 iron, 4 sulfur cluster binding"/>
    <property type="evidence" value="ECO:0007669"/>
    <property type="project" value="UniProtKB-KW"/>
</dbReference>
<dbReference type="GO" id="GO:0046872">
    <property type="term" value="F:metal ion binding"/>
    <property type="evidence" value="ECO:0007669"/>
    <property type="project" value="UniProtKB-KW"/>
</dbReference>
<dbReference type="GO" id="GO:0016491">
    <property type="term" value="F:oxidoreductase activity"/>
    <property type="evidence" value="ECO:0007669"/>
    <property type="project" value="UniProtKB-KW"/>
</dbReference>
<dbReference type="GO" id="GO:0046306">
    <property type="term" value="P:alkanesulfonate catabolic process"/>
    <property type="evidence" value="ECO:0007669"/>
    <property type="project" value="UniProtKB-UniPathway"/>
</dbReference>
<dbReference type="CDD" id="cd01335">
    <property type="entry name" value="Radical_SAM"/>
    <property type="match status" value="1"/>
</dbReference>
<dbReference type="Gene3D" id="3.20.20.70">
    <property type="entry name" value="Aldolase class I"/>
    <property type="match status" value="1"/>
</dbReference>
<dbReference type="InterPro" id="IPR017896">
    <property type="entry name" value="4Fe4S_Fe-S-bd"/>
</dbReference>
<dbReference type="InterPro" id="IPR013785">
    <property type="entry name" value="Aldolase_TIM"/>
</dbReference>
<dbReference type="InterPro" id="IPR040074">
    <property type="entry name" value="BssD/PflA/YjjW"/>
</dbReference>
<dbReference type="InterPro" id="IPR034457">
    <property type="entry name" value="Organic_radical-activating"/>
</dbReference>
<dbReference type="InterPro" id="IPR012839">
    <property type="entry name" value="Organic_radical_activase"/>
</dbReference>
<dbReference type="InterPro" id="IPR001989">
    <property type="entry name" value="Radical_activat_CS"/>
</dbReference>
<dbReference type="InterPro" id="IPR007197">
    <property type="entry name" value="rSAM"/>
</dbReference>
<dbReference type="NCBIfam" id="TIGR02494">
    <property type="entry name" value="PFLE_PFLC"/>
    <property type="match status" value="1"/>
</dbReference>
<dbReference type="PANTHER" id="PTHR30352:SF4">
    <property type="entry name" value="PYRUVATE FORMATE-LYASE 2-ACTIVATING ENZYME"/>
    <property type="match status" value="1"/>
</dbReference>
<dbReference type="PANTHER" id="PTHR30352">
    <property type="entry name" value="PYRUVATE FORMATE-LYASE-ACTIVATING ENZYME"/>
    <property type="match status" value="1"/>
</dbReference>
<dbReference type="Pfam" id="PF13353">
    <property type="entry name" value="Fer4_12"/>
    <property type="match status" value="2"/>
</dbReference>
<dbReference type="Pfam" id="PF04055">
    <property type="entry name" value="Radical_SAM"/>
    <property type="match status" value="1"/>
</dbReference>
<dbReference type="PIRSF" id="PIRSF000371">
    <property type="entry name" value="PFL_act_enz"/>
    <property type="match status" value="1"/>
</dbReference>
<dbReference type="SFLD" id="SFLDG01118">
    <property type="entry name" value="activating_enzymes__group_2"/>
    <property type="match status" value="1"/>
</dbReference>
<dbReference type="SFLD" id="SFLDS00029">
    <property type="entry name" value="Radical_SAM"/>
    <property type="match status" value="1"/>
</dbReference>
<dbReference type="SUPFAM" id="SSF54862">
    <property type="entry name" value="4Fe-4S ferredoxins"/>
    <property type="match status" value="1"/>
</dbReference>
<dbReference type="SUPFAM" id="SSF102114">
    <property type="entry name" value="Radical SAM enzymes"/>
    <property type="match status" value="1"/>
</dbReference>
<dbReference type="PROSITE" id="PS51379">
    <property type="entry name" value="4FE4S_FER_2"/>
    <property type="match status" value="2"/>
</dbReference>
<dbReference type="PROSITE" id="PS01087">
    <property type="entry name" value="RADICAL_ACTIVATING"/>
    <property type="match status" value="1"/>
</dbReference>
<dbReference type="PROSITE" id="PS51918">
    <property type="entry name" value="RADICAL_SAM"/>
    <property type="match status" value="1"/>
</dbReference>
<gene>
    <name evidence="6" type="primary">iseH</name>
    <name evidence="9" type="ordered locus">DVU_2825</name>
</gene>
<organism>
    <name type="scientific">Nitratidesulfovibrio vulgaris (strain ATCC 29579 / DSM 644 / CCUG 34227 / NCIMB 8303 / VKM B-1760 / Hildenborough)</name>
    <name type="common">Desulfovibrio vulgaris</name>
    <dbReference type="NCBI Taxonomy" id="882"/>
    <lineage>
        <taxon>Bacteria</taxon>
        <taxon>Pseudomonadati</taxon>
        <taxon>Thermodesulfobacteriota</taxon>
        <taxon>Desulfovibrionia</taxon>
        <taxon>Desulfovibrionales</taxon>
        <taxon>Desulfovibrionaceae</taxon>
        <taxon>Nitratidesulfovibrio</taxon>
    </lineage>
</organism>
<feature type="chain" id="PRO_0000450948" description="Isethionate sulfite-lyase activating enzyme">
    <location>
        <begin position="1"/>
        <end position="307"/>
    </location>
</feature>
<feature type="domain" description="Radical SAM core" evidence="4">
    <location>
        <begin position="22"/>
        <end position="307"/>
    </location>
</feature>
<feature type="domain" description="4Fe-4S ferredoxin-type 1" evidence="3">
    <location>
        <begin position="53"/>
        <end position="85"/>
    </location>
</feature>
<feature type="domain" description="4Fe-4S ferredoxin-type 2" evidence="3">
    <location>
        <begin position="86"/>
        <end position="117"/>
    </location>
</feature>
<feature type="binding site" evidence="4">
    <location>
        <position position="36"/>
    </location>
    <ligand>
        <name>[4Fe-4S] cluster</name>
        <dbReference type="ChEBI" id="CHEBI:49883"/>
        <label>1</label>
        <note>4Fe-4S-S-AdoMet</note>
    </ligand>
</feature>
<feature type="binding site" evidence="4">
    <location>
        <position position="40"/>
    </location>
    <ligand>
        <name>[4Fe-4S] cluster</name>
        <dbReference type="ChEBI" id="CHEBI:49883"/>
        <label>1</label>
        <note>4Fe-4S-S-AdoMet</note>
    </ligand>
</feature>
<feature type="binding site" evidence="1">
    <location>
        <begin position="42"/>
        <end position="44"/>
    </location>
    <ligand>
        <name>S-adenosyl-L-methionine</name>
        <dbReference type="ChEBI" id="CHEBI:59789"/>
    </ligand>
</feature>
<feature type="binding site" evidence="4">
    <location>
        <position position="43"/>
    </location>
    <ligand>
        <name>[4Fe-4S] cluster</name>
        <dbReference type="ChEBI" id="CHEBI:49883"/>
        <label>1</label>
        <note>4Fe-4S-S-AdoMet</note>
    </ligand>
</feature>
<feature type="binding site" evidence="3">
    <location>
        <position position="62"/>
    </location>
    <ligand>
        <name>[4Fe-4S] cluster</name>
        <dbReference type="ChEBI" id="CHEBI:49883"/>
        <label>2</label>
    </ligand>
</feature>
<feature type="binding site" evidence="3">
    <location>
        <position position="68"/>
    </location>
    <ligand>
        <name>[4Fe-4S] cluster</name>
        <dbReference type="ChEBI" id="CHEBI:49883"/>
        <label>2</label>
    </ligand>
</feature>
<feature type="binding site" evidence="3">
    <location>
        <position position="71"/>
    </location>
    <ligand>
        <name>[4Fe-4S] cluster</name>
        <dbReference type="ChEBI" id="CHEBI:49883"/>
        <label>2</label>
    </ligand>
</feature>
<feature type="binding site" evidence="3">
    <location>
        <position position="75"/>
    </location>
    <ligand>
        <name>[4Fe-4S] cluster</name>
        <dbReference type="ChEBI" id="CHEBI:49883"/>
        <label>3</label>
    </ligand>
</feature>
<feature type="binding site" evidence="3">
    <location>
        <position position="95"/>
    </location>
    <ligand>
        <name>[4Fe-4S] cluster</name>
        <dbReference type="ChEBI" id="CHEBI:49883"/>
        <label>3</label>
    </ligand>
</feature>
<feature type="binding site" evidence="3">
    <location>
        <position position="98"/>
    </location>
    <ligand>
        <name>[4Fe-4S] cluster</name>
        <dbReference type="ChEBI" id="CHEBI:49883"/>
        <label>3</label>
    </ligand>
</feature>
<feature type="binding site" evidence="3">
    <location>
        <position position="102"/>
    </location>
    <ligand>
        <name>[4Fe-4S] cluster</name>
        <dbReference type="ChEBI" id="CHEBI:49883"/>
        <label>3</label>
    </ligand>
</feature>
<feature type="binding site" evidence="3">
    <location>
        <position position="106"/>
    </location>
    <ligand>
        <name>[4Fe-4S] cluster</name>
        <dbReference type="ChEBI" id="CHEBI:49883"/>
        <label>2</label>
    </ligand>
</feature>
<feature type="binding site" evidence="1">
    <location>
        <position position="146"/>
    </location>
    <ligand>
        <name>S-adenosyl-L-methionine</name>
        <dbReference type="ChEBI" id="CHEBI:59789"/>
    </ligand>
</feature>
<feature type="binding site" evidence="1">
    <location>
        <begin position="195"/>
        <end position="197"/>
    </location>
    <ligand>
        <name>S-adenosyl-L-methionine</name>
        <dbReference type="ChEBI" id="CHEBI:59789"/>
    </ligand>
</feature>
<feature type="binding site" evidence="1">
    <location>
        <position position="268"/>
    </location>
    <ligand>
        <name>S-adenosyl-L-methionine</name>
        <dbReference type="ChEBI" id="CHEBI:59789"/>
    </ligand>
</feature>
<sequence>MSSIADRKTTGITFNIQKYSVHDGPGIRTVVFLKGCPLKCRWCSNPESQRKSVELAYNTGRCLTLAKCVRCVEICTAGAISRAEDDTISIDRALCNDCEQLCSGACPSNALITYGAHKTVDEVLRAVEQDSLFYARSGGGMTISGGEPFAQPAFTLALLREARRRRVHTAVETCGYASWDDMAAALPFLNYVLYDIKNLDDARHKEATGVSNQRIVENLRALRAEFPGIPVLVRTPVIPGFNDNEADIAAIAALTRELGVSYQLLPYHRLGTQKYHFLDREAPMGEVTLDAETMRRLEAVVAQTADS</sequence>
<accession>Q727N0</accession>
<reference key="1">
    <citation type="journal article" date="2004" name="Nat. Biotechnol.">
        <title>The genome sequence of the anaerobic, sulfate-reducing bacterium Desulfovibrio vulgaris Hildenborough.</title>
        <authorList>
            <person name="Heidelberg J.F."/>
            <person name="Seshadri R."/>
            <person name="Haveman S.A."/>
            <person name="Hemme C.L."/>
            <person name="Paulsen I.T."/>
            <person name="Kolonay J.F."/>
            <person name="Eisen J.A."/>
            <person name="Ward N.L."/>
            <person name="Methe B.A."/>
            <person name="Brinkac L.M."/>
            <person name="Daugherty S.C."/>
            <person name="DeBoy R.T."/>
            <person name="Dodson R.J."/>
            <person name="Durkin A.S."/>
            <person name="Madupu R."/>
            <person name="Nelson W.C."/>
            <person name="Sullivan S.A."/>
            <person name="Fouts D.E."/>
            <person name="Haft D.H."/>
            <person name="Selengut J."/>
            <person name="Peterson J.D."/>
            <person name="Davidsen T.M."/>
            <person name="Zafar N."/>
            <person name="Zhou L."/>
            <person name="Radune D."/>
            <person name="Dimitrov G."/>
            <person name="Hance M."/>
            <person name="Tran K."/>
            <person name="Khouri H.M."/>
            <person name="Gill J."/>
            <person name="Utterback T.R."/>
            <person name="Feldblyum T.V."/>
            <person name="Wall J.D."/>
            <person name="Voordouw G."/>
            <person name="Fraser C.M."/>
        </authorList>
    </citation>
    <scope>NUCLEOTIDE SEQUENCE [LARGE SCALE GENOMIC DNA]</scope>
    <source>
        <strain>ATCC 29579 / DSM 644 / CCUG 34227 / NCIMB 8303 / VKM B-1760 / Hildenborough</strain>
    </source>
</reference>
<reference key="2">
    <citation type="journal article" date="2019" name="Nat. Commun.">
        <title>Radical-mediated C-S bond cleavage in C2 sulfonate degradation by anaerobic bacteria.</title>
        <authorList>
            <person name="Xing M."/>
            <person name="Wei Y."/>
            <person name="Zhou Y."/>
            <person name="Zhang J."/>
            <person name="Lin L."/>
            <person name="Hu Y."/>
            <person name="Hua G."/>
            <person name="Urs A.N.N."/>
            <person name="Liu D."/>
            <person name="Wang F."/>
            <person name="Guo C."/>
            <person name="Tong Y."/>
            <person name="Li M."/>
            <person name="Liu Y."/>
            <person name="Ang E.L."/>
            <person name="Zhao H."/>
            <person name="Yuchi Z."/>
            <person name="Zhang Y."/>
        </authorList>
    </citation>
    <scope>FUNCTION</scope>
    <scope>CATALYTIC ACTIVITY</scope>
    <scope>COFACTOR</scope>
    <scope>PATHWAY</scope>
    <source>
        <strain>ATCC 29579 / DSM 644 / CCUG 34227 / NCIMB 8303 / VKM B-1760 / Hildenborough</strain>
    </source>
</reference>
<protein>
    <recommendedName>
        <fullName>Isethionate sulfite-lyase activating enzyme</fullName>
        <ecNumber evidence="8">1.97.1.-</ecNumber>
    </recommendedName>
    <alternativeName>
        <fullName>GRE activase IseH</fullName>
    </alternativeName>
    <alternativeName>
        <fullName>Glycyl-radical enzyme activating enzyme IseH</fullName>
    </alternativeName>
</protein>